<comment type="function">
    <text evidence="1">This protein binds to the 23S rRNA, and is important in its secondary structure. It is located near the subunit interface in the base of the L7/L12 stalk, and near the tRNA binding site of the peptidyltransferase center.</text>
</comment>
<comment type="subunit">
    <text evidence="1">Part of the 50S ribosomal subunit.</text>
</comment>
<comment type="similarity">
    <text evidence="1">Belongs to the universal ribosomal protein uL6 family.</text>
</comment>
<dbReference type="EMBL" id="CP000911">
    <property type="protein sequence ID" value="ABY38318.1"/>
    <property type="molecule type" value="Genomic_DNA"/>
</dbReference>
<dbReference type="RefSeq" id="WP_004683920.1">
    <property type="nucleotide sequence ID" value="NC_010169.1"/>
</dbReference>
<dbReference type="SMR" id="B0CH17"/>
<dbReference type="GeneID" id="97533539"/>
<dbReference type="KEGG" id="bmt:BSUIS_A1267"/>
<dbReference type="HOGENOM" id="CLU_065464_1_2_5"/>
<dbReference type="Proteomes" id="UP000008545">
    <property type="component" value="Chromosome I"/>
</dbReference>
<dbReference type="GO" id="GO:0022625">
    <property type="term" value="C:cytosolic large ribosomal subunit"/>
    <property type="evidence" value="ECO:0007669"/>
    <property type="project" value="TreeGrafter"/>
</dbReference>
<dbReference type="GO" id="GO:0019843">
    <property type="term" value="F:rRNA binding"/>
    <property type="evidence" value="ECO:0007669"/>
    <property type="project" value="UniProtKB-UniRule"/>
</dbReference>
<dbReference type="GO" id="GO:0003735">
    <property type="term" value="F:structural constituent of ribosome"/>
    <property type="evidence" value="ECO:0007669"/>
    <property type="project" value="InterPro"/>
</dbReference>
<dbReference type="GO" id="GO:0002181">
    <property type="term" value="P:cytoplasmic translation"/>
    <property type="evidence" value="ECO:0007669"/>
    <property type="project" value="TreeGrafter"/>
</dbReference>
<dbReference type="FunFam" id="3.90.930.12:FF:000001">
    <property type="entry name" value="50S ribosomal protein L6"/>
    <property type="match status" value="1"/>
</dbReference>
<dbReference type="Gene3D" id="3.90.930.12">
    <property type="entry name" value="Ribosomal protein L6, alpha-beta domain"/>
    <property type="match status" value="2"/>
</dbReference>
<dbReference type="HAMAP" id="MF_01365_B">
    <property type="entry name" value="Ribosomal_uL6_B"/>
    <property type="match status" value="1"/>
</dbReference>
<dbReference type="InterPro" id="IPR000702">
    <property type="entry name" value="Ribosomal_uL6-like"/>
</dbReference>
<dbReference type="InterPro" id="IPR036789">
    <property type="entry name" value="Ribosomal_uL6-like_a/b-dom_sf"/>
</dbReference>
<dbReference type="InterPro" id="IPR020040">
    <property type="entry name" value="Ribosomal_uL6_a/b-dom"/>
</dbReference>
<dbReference type="InterPro" id="IPR019906">
    <property type="entry name" value="Ribosomal_uL6_bac-type"/>
</dbReference>
<dbReference type="InterPro" id="IPR002358">
    <property type="entry name" value="Ribosomal_uL6_CS"/>
</dbReference>
<dbReference type="NCBIfam" id="TIGR03654">
    <property type="entry name" value="L6_bact"/>
    <property type="match status" value="1"/>
</dbReference>
<dbReference type="PANTHER" id="PTHR11655">
    <property type="entry name" value="60S/50S RIBOSOMAL PROTEIN L6/L9"/>
    <property type="match status" value="1"/>
</dbReference>
<dbReference type="PANTHER" id="PTHR11655:SF14">
    <property type="entry name" value="LARGE RIBOSOMAL SUBUNIT PROTEIN UL6M"/>
    <property type="match status" value="1"/>
</dbReference>
<dbReference type="Pfam" id="PF00347">
    <property type="entry name" value="Ribosomal_L6"/>
    <property type="match status" value="2"/>
</dbReference>
<dbReference type="PIRSF" id="PIRSF002162">
    <property type="entry name" value="Ribosomal_L6"/>
    <property type="match status" value="1"/>
</dbReference>
<dbReference type="PRINTS" id="PR00059">
    <property type="entry name" value="RIBOSOMALL6"/>
</dbReference>
<dbReference type="SUPFAM" id="SSF56053">
    <property type="entry name" value="Ribosomal protein L6"/>
    <property type="match status" value="2"/>
</dbReference>
<dbReference type="PROSITE" id="PS00525">
    <property type="entry name" value="RIBOSOMAL_L6_1"/>
    <property type="match status" value="1"/>
</dbReference>
<reference key="1">
    <citation type="submission" date="2007-12" db="EMBL/GenBank/DDBJ databases">
        <title>Brucella suis ATCC 23445 whole genome shotgun sequencing project.</title>
        <authorList>
            <person name="Setubal J.C."/>
            <person name="Bowns C."/>
            <person name="Boyle S."/>
            <person name="Crasta O.R."/>
            <person name="Czar M.J."/>
            <person name="Dharmanolla C."/>
            <person name="Gillespie J.J."/>
            <person name="Kenyon R.W."/>
            <person name="Lu J."/>
            <person name="Mane S."/>
            <person name="Mohapatra S."/>
            <person name="Nagrani S."/>
            <person name="Purkayastha A."/>
            <person name="Rajasimha H.K."/>
            <person name="Shallom J.M."/>
            <person name="Shallom S."/>
            <person name="Shukla M."/>
            <person name="Snyder E.E."/>
            <person name="Sobral B.W."/>
            <person name="Wattam A.R."/>
            <person name="Will R."/>
            <person name="Williams K."/>
            <person name="Yoo H."/>
            <person name="Bruce D."/>
            <person name="Detter C."/>
            <person name="Munk C."/>
            <person name="Brettin T.S."/>
        </authorList>
    </citation>
    <scope>NUCLEOTIDE SEQUENCE [LARGE SCALE GENOMIC DNA]</scope>
    <source>
        <strain>ATCC 23445 / NCTC 10510</strain>
    </source>
</reference>
<organism>
    <name type="scientific">Brucella suis (strain ATCC 23445 / NCTC 10510)</name>
    <dbReference type="NCBI Taxonomy" id="470137"/>
    <lineage>
        <taxon>Bacteria</taxon>
        <taxon>Pseudomonadati</taxon>
        <taxon>Pseudomonadota</taxon>
        <taxon>Alphaproteobacteria</taxon>
        <taxon>Hyphomicrobiales</taxon>
        <taxon>Brucellaceae</taxon>
        <taxon>Brucella/Ochrobactrum group</taxon>
        <taxon>Brucella</taxon>
    </lineage>
</organism>
<keyword id="KW-0687">Ribonucleoprotein</keyword>
<keyword id="KW-0689">Ribosomal protein</keyword>
<keyword id="KW-0694">RNA-binding</keyword>
<keyword id="KW-0699">rRNA-binding</keyword>
<proteinExistence type="inferred from homology"/>
<sequence>MSRIGKKPVPVPAGVTASVEGQTVKAKGAKGELSFVVHDEVLVKMEDGAVRVDPRDQSKEARSKWGMSRTMISNIFVGVKDGFEKKLEISGVGYRAAMQGKNLQLSLGFSHEVVYDVPAGITVAVPKPTEIVVTGIDKQQVGQVAAEIREYRGPEPYKGKGVKYAGEKIVRKEGKKK</sequence>
<feature type="chain" id="PRO_1000087031" description="Large ribosomal subunit protein uL6">
    <location>
        <begin position="1"/>
        <end position="177"/>
    </location>
</feature>
<protein>
    <recommendedName>
        <fullName evidence="1">Large ribosomal subunit protein uL6</fullName>
    </recommendedName>
    <alternativeName>
        <fullName evidence="2">50S ribosomal protein L6</fullName>
    </alternativeName>
</protein>
<gene>
    <name evidence="1" type="primary">rplF</name>
    <name type="ordered locus">BSUIS_A1267</name>
</gene>
<name>RL6_BRUSI</name>
<evidence type="ECO:0000255" key="1">
    <source>
        <dbReference type="HAMAP-Rule" id="MF_01365"/>
    </source>
</evidence>
<evidence type="ECO:0000305" key="2"/>
<accession>B0CH17</accession>